<keyword id="KW-0004">4Fe-4S</keyword>
<keyword id="KW-0408">Iron</keyword>
<keyword id="KW-0411">Iron-sulfur</keyword>
<keyword id="KW-0456">Lyase</keyword>
<keyword id="KW-0479">Metal-binding</keyword>
<keyword id="KW-1185">Reference proteome</keyword>
<keyword id="KW-0949">S-adenosyl-L-methionine</keyword>
<keyword id="KW-0784">Thiamine biosynthesis</keyword>
<keyword id="KW-0862">Zinc</keyword>
<feature type="chain" id="PRO_0000152854" description="Phosphomethylpyrimidine synthase">
    <location>
        <begin position="1"/>
        <end position="603"/>
    </location>
</feature>
<feature type="binding site" evidence="1">
    <location>
        <position position="224"/>
    </location>
    <ligand>
        <name>substrate</name>
    </ligand>
</feature>
<feature type="binding site" evidence="1">
    <location>
        <position position="253"/>
    </location>
    <ligand>
        <name>substrate</name>
    </ligand>
</feature>
<feature type="binding site" evidence="1">
    <location>
        <position position="282"/>
    </location>
    <ligand>
        <name>substrate</name>
    </ligand>
</feature>
<feature type="binding site" evidence="1">
    <location>
        <position position="318"/>
    </location>
    <ligand>
        <name>substrate</name>
    </ligand>
</feature>
<feature type="binding site" evidence="1">
    <location>
        <begin position="338"/>
        <end position="340"/>
    </location>
    <ligand>
        <name>substrate</name>
    </ligand>
</feature>
<feature type="binding site" evidence="1">
    <location>
        <begin position="379"/>
        <end position="382"/>
    </location>
    <ligand>
        <name>substrate</name>
    </ligand>
</feature>
<feature type="binding site" evidence="1">
    <location>
        <position position="418"/>
    </location>
    <ligand>
        <name>substrate</name>
    </ligand>
</feature>
<feature type="binding site" evidence="1">
    <location>
        <position position="422"/>
    </location>
    <ligand>
        <name>Zn(2+)</name>
        <dbReference type="ChEBI" id="CHEBI:29105"/>
    </ligand>
</feature>
<feature type="binding site" evidence="1">
    <location>
        <position position="445"/>
    </location>
    <ligand>
        <name>substrate</name>
    </ligand>
</feature>
<feature type="binding site" evidence="1">
    <location>
        <position position="486"/>
    </location>
    <ligand>
        <name>Zn(2+)</name>
        <dbReference type="ChEBI" id="CHEBI:29105"/>
    </ligand>
</feature>
<feature type="binding site" evidence="1">
    <location>
        <position position="566"/>
    </location>
    <ligand>
        <name>[4Fe-4S] cluster</name>
        <dbReference type="ChEBI" id="CHEBI:49883"/>
        <note>4Fe-4S-S-AdoMet</note>
    </ligand>
</feature>
<feature type="binding site" evidence="1">
    <location>
        <position position="569"/>
    </location>
    <ligand>
        <name>[4Fe-4S] cluster</name>
        <dbReference type="ChEBI" id="CHEBI:49883"/>
        <note>4Fe-4S-S-AdoMet</note>
    </ligand>
</feature>
<feature type="binding site" evidence="1">
    <location>
        <position position="574"/>
    </location>
    <ligand>
        <name>[4Fe-4S] cluster</name>
        <dbReference type="ChEBI" id="CHEBI:49883"/>
        <note>4Fe-4S-S-AdoMet</note>
    </ligand>
</feature>
<accession>Q87CY6</accession>
<sequence>MNITTALPLPTHLLSEKVTAPLLGARKIYVTGSRQDIRVPMREIALTPSSARYGGNENLSLVLYDTSGIYTDPQATIDLACGLPRLRTAWIDERADTVEAKLHFKVPESVSVTAPPFPTPPQPLRARDNVAVTQLEYARRGLVTPEMEFVAIREQQRREQTVENLRGQRHAGDAWGALVGTPITPEFVRDEIARGRAILPNNINHPESEPMIIGRNFLTKINANIGTSALSSSIAEEVEKLVWAIRWGADTIMDLSTGRDIHATREWILRNSPVPVGTVPIYQALEKVDGHVDALSWDVFRDTLIEQAEQGVDYVTVHAGVLRDFIPLTASRLTGIVSRGGSIMARWCQAHRSENFLYTHFEELCEIMRAYDVAFSLGDGLRPGCIADANDAAQFAELEILGKLTHIAWNHQVQVMVEGPGHVPMQLIKANMDKQLAACGEAPFYTLGPLTTDIAPGYDHITSAIGAAMIGWYGTAMLCYVTPKEHLGLPNLQDVHDGIIAYKIAAHAADLAKGHPAAQARDDALSKARFEFRWQDQFHLSLDPEKALALHDESLPKEAHKRAAFCSMCGPQFCSMKISQEVRDASSSELSDANTDINTSDGI</sequence>
<name>THIC_XYLFT</name>
<dbReference type="EC" id="4.1.99.17" evidence="1"/>
<dbReference type="EMBL" id="AE009442">
    <property type="protein sequence ID" value="AAO28768.1"/>
    <property type="status" value="ALT_INIT"/>
    <property type="molecule type" value="Genomic_DNA"/>
</dbReference>
<dbReference type="RefSeq" id="WP_011097836.1">
    <property type="nucleotide sequence ID" value="NC_004556.1"/>
</dbReference>
<dbReference type="SMR" id="Q87CY6"/>
<dbReference type="GeneID" id="93904694"/>
<dbReference type="KEGG" id="xft:PD_0903"/>
<dbReference type="HOGENOM" id="CLU_013181_2_1_6"/>
<dbReference type="UniPathway" id="UPA00060"/>
<dbReference type="Proteomes" id="UP000002516">
    <property type="component" value="Chromosome"/>
</dbReference>
<dbReference type="GO" id="GO:0005829">
    <property type="term" value="C:cytosol"/>
    <property type="evidence" value="ECO:0007669"/>
    <property type="project" value="TreeGrafter"/>
</dbReference>
<dbReference type="GO" id="GO:0051539">
    <property type="term" value="F:4 iron, 4 sulfur cluster binding"/>
    <property type="evidence" value="ECO:0007669"/>
    <property type="project" value="UniProtKB-KW"/>
</dbReference>
<dbReference type="GO" id="GO:0016830">
    <property type="term" value="F:carbon-carbon lyase activity"/>
    <property type="evidence" value="ECO:0007669"/>
    <property type="project" value="InterPro"/>
</dbReference>
<dbReference type="GO" id="GO:0008270">
    <property type="term" value="F:zinc ion binding"/>
    <property type="evidence" value="ECO:0007669"/>
    <property type="project" value="UniProtKB-UniRule"/>
</dbReference>
<dbReference type="GO" id="GO:0009228">
    <property type="term" value="P:thiamine biosynthetic process"/>
    <property type="evidence" value="ECO:0007669"/>
    <property type="project" value="UniProtKB-KW"/>
</dbReference>
<dbReference type="GO" id="GO:0009229">
    <property type="term" value="P:thiamine diphosphate biosynthetic process"/>
    <property type="evidence" value="ECO:0007669"/>
    <property type="project" value="UniProtKB-UniRule"/>
</dbReference>
<dbReference type="FunFam" id="3.20.20.540:FF:000001">
    <property type="entry name" value="Phosphomethylpyrimidine synthase"/>
    <property type="match status" value="1"/>
</dbReference>
<dbReference type="Gene3D" id="6.10.250.620">
    <property type="match status" value="1"/>
</dbReference>
<dbReference type="Gene3D" id="3.20.20.540">
    <property type="entry name" value="Radical SAM ThiC family, central domain"/>
    <property type="match status" value="1"/>
</dbReference>
<dbReference type="HAMAP" id="MF_00089">
    <property type="entry name" value="ThiC"/>
    <property type="match status" value="1"/>
</dbReference>
<dbReference type="InterPro" id="IPR037509">
    <property type="entry name" value="ThiC"/>
</dbReference>
<dbReference type="InterPro" id="IPR025747">
    <property type="entry name" value="ThiC-associated_dom"/>
</dbReference>
<dbReference type="InterPro" id="IPR038521">
    <property type="entry name" value="ThiC/Bza_core_dom"/>
</dbReference>
<dbReference type="InterPro" id="IPR002817">
    <property type="entry name" value="ThiC/BzaA/B"/>
</dbReference>
<dbReference type="NCBIfam" id="NF006763">
    <property type="entry name" value="PRK09284.1"/>
    <property type="match status" value="1"/>
</dbReference>
<dbReference type="NCBIfam" id="NF009895">
    <property type="entry name" value="PRK13352.1"/>
    <property type="match status" value="1"/>
</dbReference>
<dbReference type="NCBIfam" id="TIGR00190">
    <property type="entry name" value="thiC"/>
    <property type="match status" value="1"/>
</dbReference>
<dbReference type="PANTHER" id="PTHR30557:SF1">
    <property type="entry name" value="PHOSPHOMETHYLPYRIMIDINE SYNTHASE, CHLOROPLASTIC"/>
    <property type="match status" value="1"/>
</dbReference>
<dbReference type="PANTHER" id="PTHR30557">
    <property type="entry name" value="THIAMINE BIOSYNTHESIS PROTEIN THIC"/>
    <property type="match status" value="1"/>
</dbReference>
<dbReference type="Pfam" id="PF13667">
    <property type="entry name" value="ThiC-associated"/>
    <property type="match status" value="1"/>
</dbReference>
<dbReference type="Pfam" id="PF01964">
    <property type="entry name" value="ThiC_Rad_SAM"/>
    <property type="match status" value="1"/>
</dbReference>
<dbReference type="SFLD" id="SFLDF00407">
    <property type="entry name" value="phosphomethylpyrimidine_syntha"/>
    <property type="match status" value="1"/>
</dbReference>
<dbReference type="SFLD" id="SFLDG01114">
    <property type="entry name" value="phosphomethylpyrimidine_syntha"/>
    <property type="match status" value="1"/>
</dbReference>
<dbReference type="SFLD" id="SFLDS00113">
    <property type="entry name" value="Radical_SAM_Phosphomethylpyrim"/>
    <property type="match status" value="1"/>
</dbReference>
<organism>
    <name type="scientific">Xylella fastidiosa (strain Temecula1 / ATCC 700964)</name>
    <dbReference type="NCBI Taxonomy" id="183190"/>
    <lineage>
        <taxon>Bacteria</taxon>
        <taxon>Pseudomonadati</taxon>
        <taxon>Pseudomonadota</taxon>
        <taxon>Gammaproteobacteria</taxon>
        <taxon>Lysobacterales</taxon>
        <taxon>Lysobacteraceae</taxon>
        <taxon>Xylella</taxon>
    </lineage>
</organism>
<evidence type="ECO:0000255" key="1">
    <source>
        <dbReference type="HAMAP-Rule" id="MF_00089"/>
    </source>
</evidence>
<evidence type="ECO:0000305" key="2"/>
<protein>
    <recommendedName>
        <fullName evidence="1">Phosphomethylpyrimidine synthase</fullName>
        <ecNumber evidence="1">4.1.99.17</ecNumber>
    </recommendedName>
    <alternativeName>
        <fullName evidence="1">Hydroxymethylpyrimidine phosphate synthase</fullName>
        <shortName evidence="1">HMP-P synthase</shortName>
        <shortName evidence="1">HMP-phosphate synthase</shortName>
        <shortName evidence="1">HMPP synthase</shortName>
    </alternativeName>
    <alternativeName>
        <fullName evidence="1">Thiamine biosynthesis protein ThiC</fullName>
    </alternativeName>
</protein>
<reference key="1">
    <citation type="journal article" date="2003" name="J. Bacteriol.">
        <title>Comparative analyses of the complete genome sequences of Pierce's disease and citrus variegated chlorosis strains of Xylella fastidiosa.</title>
        <authorList>
            <person name="Van Sluys M.A."/>
            <person name="de Oliveira M.C."/>
            <person name="Monteiro-Vitorello C.B."/>
            <person name="Miyaki C.Y."/>
            <person name="Furlan L.R."/>
            <person name="Camargo L.E.A."/>
            <person name="da Silva A.C.R."/>
            <person name="Moon D.H."/>
            <person name="Takita M.A."/>
            <person name="Lemos E.G.M."/>
            <person name="Machado M.A."/>
            <person name="Ferro M.I.T."/>
            <person name="da Silva F.R."/>
            <person name="Goldman M.H.S."/>
            <person name="Goldman G.H."/>
            <person name="Lemos M.V.F."/>
            <person name="El-Dorry H."/>
            <person name="Tsai S.M."/>
            <person name="Carrer H."/>
            <person name="Carraro D.M."/>
            <person name="de Oliveira R.C."/>
            <person name="Nunes L.R."/>
            <person name="Siqueira W.J."/>
            <person name="Coutinho L.L."/>
            <person name="Kimura E.T."/>
            <person name="Ferro E.S."/>
            <person name="Harakava R."/>
            <person name="Kuramae E.E."/>
            <person name="Marino C.L."/>
            <person name="Giglioti E."/>
            <person name="Abreu I.L."/>
            <person name="Alves L.M.C."/>
            <person name="do Amaral A.M."/>
            <person name="Baia G.S."/>
            <person name="Blanco S.R."/>
            <person name="Brito M.S."/>
            <person name="Cannavan F.S."/>
            <person name="Celestino A.V."/>
            <person name="da Cunha A.F."/>
            <person name="Fenille R.C."/>
            <person name="Ferro J.A."/>
            <person name="Formighieri E.F."/>
            <person name="Kishi L.T."/>
            <person name="Leoni S.G."/>
            <person name="Oliveira A.R."/>
            <person name="Rosa V.E. Jr."/>
            <person name="Sassaki F.T."/>
            <person name="Sena J.A.D."/>
            <person name="de Souza A.A."/>
            <person name="Truffi D."/>
            <person name="Tsukumo F."/>
            <person name="Yanai G.M."/>
            <person name="Zaros L.G."/>
            <person name="Civerolo E.L."/>
            <person name="Simpson A.J.G."/>
            <person name="Almeida N.F. Jr."/>
            <person name="Setubal J.C."/>
            <person name="Kitajima J.P."/>
        </authorList>
    </citation>
    <scope>NUCLEOTIDE SEQUENCE [LARGE SCALE GENOMIC DNA]</scope>
    <source>
        <strain>Temecula1 / ATCC 700964</strain>
    </source>
</reference>
<comment type="function">
    <text evidence="1">Catalyzes the synthesis of the hydroxymethylpyrimidine phosphate (HMP-P) moiety of thiamine from aminoimidazole ribotide (AIR) in a radical S-adenosyl-L-methionine (SAM)-dependent reaction.</text>
</comment>
<comment type="catalytic activity">
    <reaction evidence="1">
        <text>5-amino-1-(5-phospho-beta-D-ribosyl)imidazole + S-adenosyl-L-methionine = 4-amino-2-methyl-5-(phosphooxymethyl)pyrimidine + CO + 5'-deoxyadenosine + formate + L-methionine + 3 H(+)</text>
        <dbReference type="Rhea" id="RHEA:24840"/>
        <dbReference type="ChEBI" id="CHEBI:15378"/>
        <dbReference type="ChEBI" id="CHEBI:15740"/>
        <dbReference type="ChEBI" id="CHEBI:17245"/>
        <dbReference type="ChEBI" id="CHEBI:17319"/>
        <dbReference type="ChEBI" id="CHEBI:57844"/>
        <dbReference type="ChEBI" id="CHEBI:58354"/>
        <dbReference type="ChEBI" id="CHEBI:59789"/>
        <dbReference type="ChEBI" id="CHEBI:137981"/>
        <dbReference type="EC" id="4.1.99.17"/>
    </reaction>
</comment>
<comment type="cofactor">
    <cofactor evidence="1">
        <name>[4Fe-4S] cluster</name>
        <dbReference type="ChEBI" id="CHEBI:49883"/>
    </cofactor>
    <text evidence="1">Binds 1 [4Fe-4S] cluster per subunit. The cluster is coordinated with 3 cysteines and an exchangeable S-adenosyl-L-methionine.</text>
</comment>
<comment type="pathway">
    <text evidence="1">Cofactor biosynthesis; thiamine diphosphate biosynthesis.</text>
</comment>
<comment type="subunit">
    <text evidence="1">Homodimer.</text>
</comment>
<comment type="similarity">
    <text evidence="1">Belongs to the ThiC family.</text>
</comment>
<comment type="sequence caution" evidence="2">
    <conflict type="erroneous initiation">
        <sequence resource="EMBL-CDS" id="AAO28768"/>
    </conflict>
</comment>
<gene>
    <name evidence="1" type="primary">thiC</name>
    <name type="ordered locus">PD_0903</name>
</gene>
<proteinExistence type="inferred from homology"/>